<accession>A9WY13</accession>
<dbReference type="EMBL" id="CP000912">
    <property type="protein sequence ID" value="ABY39329.1"/>
    <property type="molecule type" value="Genomic_DNA"/>
</dbReference>
<dbReference type="RefSeq" id="WP_002966273.1">
    <property type="nucleotide sequence ID" value="NC_010167.1"/>
</dbReference>
<dbReference type="SMR" id="A9WY13"/>
<dbReference type="GeneID" id="97535519"/>
<dbReference type="KEGG" id="bmt:BSUIS_B0321"/>
<dbReference type="HOGENOM" id="CLU_114845_0_0_5"/>
<dbReference type="Proteomes" id="UP000008545">
    <property type="component" value="Chromosome II"/>
</dbReference>
<dbReference type="GO" id="GO:0010181">
    <property type="term" value="F:FMN binding"/>
    <property type="evidence" value="ECO:0007669"/>
    <property type="project" value="InterPro"/>
</dbReference>
<dbReference type="GO" id="GO:0036211">
    <property type="term" value="P:protein modification process"/>
    <property type="evidence" value="ECO:0007669"/>
    <property type="project" value="InterPro"/>
</dbReference>
<dbReference type="Gene3D" id="3.40.50.360">
    <property type="match status" value="1"/>
</dbReference>
<dbReference type="HAMAP" id="MF_00128">
    <property type="entry name" value="NrdI"/>
    <property type="match status" value="1"/>
</dbReference>
<dbReference type="InterPro" id="IPR029039">
    <property type="entry name" value="Flavoprotein-like_sf"/>
</dbReference>
<dbReference type="InterPro" id="IPR020852">
    <property type="entry name" value="RNR_Ib_NrdI_bac"/>
</dbReference>
<dbReference type="InterPro" id="IPR004465">
    <property type="entry name" value="RNR_NrdI"/>
</dbReference>
<dbReference type="NCBIfam" id="TIGR00333">
    <property type="entry name" value="nrdI"/>
    <property type="match status" value="1"/>
</dbReference>
<dbReference type="PANTHER" id="PTHR37297">
    <property type="entry name" value="PROTEIN NRDI"/>
    <property type="match status" value="1"/>
</dbReference>
<dbReference type="PANTHER" id="PTHR37297:SF1">
    <property type="entry name" value="PROTEIN NRDI"/>
    <property type="match status" value="1"/>
</dbReference>
<dbReference type="Pfam" id="PF07972">
    <property type="entry name" value="Flavodoxin_NdrI"/>
    <property type="match status" value="1"/>
</dbReference>
<dbReference type="PIRSF" id="PIRSF005087">
    <property type="entry name" value="NrdI"/>
    <property type="match status" value="1"/>
</dbReference>
<dbReference type="SUPFAM" id="SSF52218">
    <property type="entry name" value="Flavoproteins"/>
    <property type="match status" value="1"/>
</dbReference>
<organism>
    <name type="scientific">Brucella suis (strain ATCC 23445 / NCTC 10510)</name>
    <dbReference type="NCBI Taxonomy" id="470137"/>
    <lineage>
        <taxon>Bacteria</taxon>
        <taxon>Pseudomonadati</taxon>
        <taxon>Pseudomonadota</taxon>
        <taxon>Alphaproteobacteria</taxon>
        <taxon>Hyphomicrobiales</taxon>
        <taxon>Brucellaceae</taxon>
        <taxon>Brucella/Ochrobactrum group</taxon>
        <taxon>Brucella</taxon>
    </lineage>
</organism>
<sequence>MSLIVYFSSRSGNTHRFVERLGVRSSRIPLEASGALQVREPFVLVTPTYGGGSTKGAVPNPVIRFLNDADNRALIRGVIAAGNSNFGEAFCIAGNIISAKCGVPYLYRFELLGTAEDVGNVRNGMEQFWTRQTQA</sequence>
<gene>
    <name evidence="1" type="primary">nrdI</name>
    <name type="ordered locus">BSUIS_B0321</name>
</gene>
<protein>
    <recommendedName>
        <fullName evidence="1">Protein NrdI</fullName>
    </recommendedName>
</protein>
<comment type="function">
    <text evidence="1">Probably involved in ribonucleotide reductase function.</text>
</comment>
<comment type="similarity">
    <text evidence="1">Belongs to the NrdI family.</text>
</comment>
<evidence type="ECO:0000255" key="1">
    <source>
        <dbReference type="HAMAP-Rule" id="MF_00128"/>
    </source>
</evidence>
<name>NRDI_BRUSI</name>
<reference key="1">
    <citation type="submission" date="2007-12" db="EMBL/GenBank/DDBJ databases">
        <title>Brucella suis ATCC 23445 whole genome shotgun sequencing project.</title>
        <authorList>
            <person name="Setubal J.C."/>
            <person name="Bowns C."/>
            <person name="Boyle S."/>
            <person name="Crasta O.R."/>
            <person name="Czar M.J."/>
            <person name="Dharmanolla C."/>
            <person name="Gillespie J.J."/>
            <person name="Kenyon R.W."/>
            <person name="Lu J."/>
            <person name="Mane S."/>
            <person name="Mohapatra S."/>
            <person name="Nagrani S."/>
            <person name="Purkayastha A."/>
            <person name="Rajasimha H.K."/>
            <person name="Shallom J.M."/>
            <person name="Shallom S."/>
            <person name="Shukla M."/>
            <person name="Snyder E.E."/>
            <person name="Sobral B.W."/>
            <person name="Wattam A.R."/>
            <person name="Will R."/>
            <person name="Williams K."/>
            <person name="Yoo H."/>
            <person name="Bruce D."/>
            <person name="Detter C."/>
            <person name="Munk C."/>
            <person name="Brettin T.S."/>
        </authorList>
    </citation>
    <scope>NUCLEOTIDE SEQUENCE [LARGE SCALE GENOMIC DNA]</scope>
    <source>
        <strain>ATCC 23445 / NCTC 10510</strain>
    </source>
</reference>
<proteinExistence type="inferred from homology"/>
<feature type="chain" id="PRO_1000076297" description="Protein NrdI">
    <location>
        <begin position="1"/>
        <end position="135"/>
    </location>
</feature>